<protein>
    <recommendedName>
        <fullName evidence="1">Nucleoid-associated protein PD_1058</fullName>
    </recommendedName>
</protein>
<sequence>MRGNIAQLMQQAQKMQENLQRAQEELAKLEVTGSAGGSMVSVILSGTKECRKVRIDPSILNDQEMIEDLIAAAFNDASNKVDAESKERMGSATLGMSLPPGFKLPF</sequence>
<organism>
    <name type="scientific">Xylella fastidiosa (strain Temecula1 / ATCC 700964)</name>
    <dbReference type="NCBI Taxonomy" id="183190"/>
    <lineage>
        <taxon>Bacteria</taxon>
        <taxon>Pseudomonadati</taxon>
        <taxon>Pseudomonadota</taxon>
        <taxon>Gammaproteobacteria</taxon>
        <taxon>Lysobacterales</taxon>
        <taxon>Lysobacteraceae</taxon>
        <taxon>Xylella</taxon>
    </lineage>
</organism>
<dbReference type="EMBL" id="AE009442">
    <property type="protein sequence ID" value="AAO28918.1"/>
    <property type="molecule type" value="Genomic_DNA"/>
</dbReference>
<dbReference type="RefSeq" id="WP_004572794.1">
    <property type="nucleotide sequence ID" value="NC_004556.1"/>
</dbReference>
<dbReference type="SMR" id="Q87CK7"/>
<dbReference type="KEGG" id="xft:PD_1058"/>
<dbReference type="HOGENOM" id="CLU_140930_0_0_6"/>
<dbReference type="Proteomes" id="UP000002516">
    <property type="component" value="Chromosome"/>
</dbReference>
<dbReference type="GO" id="GO:0043590">
    <property type="term" value="C:bacterial nucleoid"/>
    <property type="evidence" value="ECO:0007669"/>
    <property type="project" value="UniProtKB-UniRule"/>
</dbReference>
<dbReference type="GO" id="GO:0005829">
    <property type="term" value="C:cytosol"/>
    <property type="evidence" value="ECO:0007669"/>
    <property type="project" value="TreeGrafter"/>
</dbReference>
<dbReference type="GO" id="GO:0003677">
    <property type="term" value="F:DNA binding"/>
    <property type="evidence" value="ECO:0007669"/>
    <property type="project" value="UniProtKB-UniRule"/>
</dbReference>
<dbReference type="FunFam" id="3.30.1310.10:FF:000001">
    <property type="entry name" value="Nucleoid-associated protein YbaB"/>
    <property type="match status" value="1"/>
</dbReference>
<dbReference type="Gene3D" id="3.30.1310.10">
    <property type="entry name" value="Nucleoid-associated protein YbaB-like domain"/>
    <property type="match status" value="1"/>
</dbReference>
<dbReference type="HAMAP" id="MF_00274">
    <property type="entry name" value="DNA_YbaB_EbfC"/>
    <property type="match status" value="1"/>
</dbReference>
<dbReference type="InterPro" id="IPR036894">
    <property type="entry name" value="YbaB-like_sf"/>
</dbReference>
<dbReference type="InterPro" id="IPR004401">
    <property type="entry name" value="YbaB/EbfC"/>
</dbReference>
<dbReference type="NCBIfam" id="TIGR00103">
    <property type="entry name" value="DNA_YbaB_EbfC"/>
    <property type="match status" value="1"/>
</dbReference>
<dbReference type="PANTHER" id="PTHR33449">
    <property type="entry name" value="NUCLEOID-ASSOCIATED PROTEIN YBAB"/>
    <property type="match status" value="1"/>
</dbReference>
<dbReference type="PANTHER" id="PTHR33449:SF1">
    <property type="entry name" value="NUCLEOID-ASSOCIATED PROTEIN YBAB"/>
    <property type="match status" value="1"/>
</dbReference>
<dbReference type="Pfam" id="PF02575">
    <property type="entry name" value="YbaB_DNA_bd"/>
    <property type="match status" value="1"/>
</dbReference>
<dbReference type="PIRSF" id="PIRSF004555">
    <property type="entry name" value="UCP004555"/>
    <property type="match status" value="1"/>
</dbReference>
<dbReference type="SUPFAM" id="SSF82607">
    <property type="entry name" value="YbaB-like"/>
    <property type="match status" value="1"/>
</dbReference>
<name>Y1058_XYLFT</name>
<keyword id="KW-0963">Cytoplasm</keyword>
<keyword id="KW-0238">DNA-binding</keyword>
<keyword id="KW-1185">Reference proteome</keyword>
<comment type="function">
    <text evidence="1">Binds to DNA and alters its conformation. May be involved in regulation of gene expression, nucleoid organization and DNA protection.</text>
</comment>
<comment type="subunit">
    <text evidence="1">Homodimer.</text>
</comment>
<comment type="subcellular location">
    <subcellularLocation>
        <location evidence="1">Cytoplasm</location>
        <location evidence="1">Nucleoid</location>
    </subcellularLocation>
</comment>
<comment type="similarity">
    <text evidence="1">Belongs to the YbaB/EbfC family.</text>
</comment>
<gene>
    <name type="ordered locus">PD_1058</name>
</gene>
<proteinExistence type="inferred from homology"/>
<accession>Q87CK7</accession>
<evidence type="ECO:0000255" key="1">
    <source>
        <dbReference type="HAMAP-Rule" id="MF_00274"/>
    </source>
</evidence>
<feature type="chain" id="PRO_0000170470" description="Nucleoid-associated protein PD_1058">
    <location>
        <begin position="1"/>
        <end position="106"/>
    </location>
</feature>
<reference key="1">
    <citation type="journal article" date="2003" name="J. Bacteriol.">
        <title>Comparative analyses of the complete genome sequences of Pierce's disease and citrus variegated chlorosis strains of Xylella fastidiosa.</title>
        <authorList>
            <person name="Van Sluys M.A."/>
            <person name="de Oliveira M.C."/>
            <person name="Monteiro-Vitorello C.B."/>
            <person name="Miyaki C.Y."/>
            <person name="Furlan L.R."/>
            <person name="Camargo L.E.A."/>
            <person name="da Silva A.C.R."/>
            <person name="Moon D.H."/>
            <person name="Takita M.A."/>
            <person name="Lemos E.G.M."/>
            <person name="Machado M.A."/>
            <person name="Ferro M.I.T."/>
            <person name="da Silva F.R."/>
            <person name="Goldman M.H.S."/>
            <person name="Goldman G.H."/>
            <person name="Lemos M.V.F."/>
            <person name="El-Dorry H."/>
            <person name="Tsai S.M."/>
            <person name="Carrer H."/>
            <person name="Carraro D.M."/>
            <person name="de Oliveira R.C."/>
            <person name="Nunes L.R."/>
            <person name="Siqueira W.J."/>
            <person name="Coutinho L.L."/>
            <person name="Kimura E.T."/>
            <person name="Ferro E.S."/>
            <person name="Harakava R."/>
            <person name="Kuramae E.E."/>
            <person name="Marino C.L."/>
            <person name="Giglioti E."/>
            <person name="Abreu I.L."/>
            <person name="Alves L.M.C."/>
            <person name="do Amaral A.M."/>
            <person name="Baia G.S."/>
            <person name="Blanco S.R."/>
            <person name="Brito M.S."/>
            <person name="Cannavan F.S."/>
            <person name="Celestino A.V."/>
            <person name="da Cunha A.F."/>
            <person name="Fenille R.C."/>
            <person name="Ferro J.A."/>
            <person name="Formighieri E.F."/>
            <person name="Kishi L.T."/>
            <person name="Leoni S.G."/>
            <person name="Oliveira A.R."/>
            <person name="Rosa V.E. Jr."/>
            <person name="Sassaki F.T."/>
            <person name="Sena J.A.D."/>
            <person name="de Souza A.A."/>
            <person name="Truffi D."/>
            <person name="Tsukumo F."/>
            <person name="Yanai G.M."/>
            <person name="Zaros L.G."/>
            <person name="Civerolo E.L."/>
            <person name="Simpson A.J.G."/>
            <person name="Almeida N.F. Jr."/>
            <person name="Setubal J.C."/>
            <person name="Kitajima J.P."/>
        </authorList>
    </citation>
    <scope>NUCLEOTIDE SEQUENCE [LARGE SCALE GENOMIC DNA]</scope>
    <source>
        <strain>Temecula1 / ATCC 700964</strain>
    </source>
</reference>